<sequence length="467" mass="52847">MSKVASIVDVLQGKVAIGETVTVRGWVRTRRDSKAGLSFLAVYDGSCFDPIQAIINNDIENYESEILRLTTGCSVIVTGKVVESPAEGQAVELQAEKVEVTGFVEDPDTYPMAAKRHSIEYLREVAHLRPRTNIIGAVARVRHCLSQAIHRFFHEQGFYWVATPLITASDTEGAGEMFRVSTLDLENLPRSENGKVDFSQDFFGKESFLTVSGQLNGETYACALSKIYTFGPTFRAENSNTTRHLAEFWMVEPEVAFATLADNAKLAEDMLKYVFRAVLAERKDDLQFFEKHVDKDVITRLENFVNSDFAQIDYTDAIDVLLKSGKKFEFPVSWGIDLSSEHERFLAEEYFKSPVVVKNYPKDIKAFYMRLNDDEKTVAAMDVLAPGIGEIIGGSQREERLEVLDKRMEEMGLNPDDYWWYRDLRKYGSVPHSGFGLGFERLIVYVTGVQNIRDVIPFPRAPRNANF</sequence>
<protein>
    <recommendedName>
        <fullName evidence="1">Asparagine--tRNA ligase</fullName>
        <ecNumber evidence="1">6.1.1.22</ecNumber>
    </recommendedName>
    <alternativeName>
        <fullName evidence="1">Asparaginyl-tRNA synthetase</fullName>
        <shortName evidence="1">AsnRS</shortName>
    </alternativeName>
</protein>
<name>SYN_HAEIN</name>
<gene>
    <name evidence="1" type="primary">asnS</name>
    <name type="ordered locus">HI_1302</name>
</gene>
<accession>P43829</accession>
<evidence type="ECO:0000255" key="1">
    <source>
        <dbReference type="HAMAP-Rule" id="MF_00534"/>
    </source>
</evidence>
<evidence type="ECO:0000305" key="2"/>
<proteinExistence type="inferred from homology"/>
<reference key="1">
    <citation type="journal article" date="1995" name="Science">
        <title>Whole-genome random sequencing and assembly of Haemophilus influenzae Rd.</title>
        <authorList>
            <person name="Fleischmann R.D."/>
            <person name="Adams M.D."/>
            <person name="White O."/>
            <person name="Clayton R.A."/>
            <person name="Kirkness E.F."/>
            <person name="Kerlavage A.R."/>
            <person name="Bult C.J."/>
            <person name="Tomb J.-F."/>
            <person name="Dougherty B.A."/>
            <person name="Merrick J.M."/>
            <person name="McKenney K."/>
            <person name="Sutton G.G."/>
            <person name="FitzHugh W."/>
            <person name="Fields C.A."/>
            <person name="Gocayne J.D."/>
            <person name="Scott J.D."/>
            <person name="Shirley R."/>
            <person name="Liu L.-I."/>
            <person name="Glodek A."/>
            <person name="Kelley J.M."/>
            <person name="Weidman J.F."/>
            <person name="Phillips C.A."/>
            <person name="Spriggs T."/>
            <person name="Hedblom E."/>
            <person name="Cotton M.D."/>
            <person name="Utterback T.R."/>
            <person name="Hanna M.C."/>
            <person name="Nguyen D.T."/>
            <person name="Saudek D.M."/>
            <person name="Brandon R.C."/>
            <person name="Fine L.D."/>
            <person name="Fritchman J.L."/>
            <person name="Fuhrmann J.L."/>
            <person name="Geoghagen N.S.M."/>
            <person name="Gnehm C.L."/>
            <person name="McDonald L.A."/>
            <person name="Small K.V."/>
            <person name="Fraser C.M."/>
            <person name="Smith H.O."/>
            <person name="Venter J.C."/>
        </authorList>
    </citation>
    <scope>NUCLEOTIDE SEQUENCE [LARGE SCALE GENOMIC DNA]</scope>
    <source>
        <strain>ATCC 51907 / DSM 11121 / KW20 / Rd</strain>
    </source>
</reference>
<organism>
    <name type="scientific">Haemophilus influenzae (strain ATCC 51907 / DSM 11121 / KW20 / Rd)</name>
    <dbReference type="NCBI Taxonomy" id="71421"/>
    <lineage>
        <taxon>Bacteria</taxon>
        <taxon>Pseudomonadati</taxon>
        <taxon>Pseudomonadota</taxon>
        <taxon>Gammaproteobacteria</taxon>
        <taxon>Pasteurellales</taxon>
        <taxon>Pasteurellaceae</taxon>
        <taxon>Haemophilus</taxon>
    </lineage>
</organism>
<keyword id="KW-0030">Aminoacyl-tRNA synthetase</keyword>
<keyword id="KW-0067">ATP-binding</keyword>
<keyword id="KW-0963">Cytoplasm</keyword>
<keyword id="KW-0436">Ligase</keyword>
<keyword id="KW-0547">Nucleotide-binding</keyword>
<keyword id="KW-0648">Protein biosynthesis</keyword>
<keyword id="KW-1185">Reference proteome</keyword>
<feature type="chain" id="PRO_0000176414" description="Asparagine--tRNA ligase">
    <location>
        <begin position="1"/>
        <end position="467"/>
    </location>
</feature>
<comment type="catalytic activity">
    <reaction evidence="1">
        <text>tRNA(Asn) + L-asparagine + ATP = L-asparaginyl-tRNA(Asn) + AMP + diphosphate + H(+)</text>
        <dbReference type="Rhea" id="RHEA:11180"/>
        <dbReference type="Rhea" id="RHEA-COMP:9659"/>
        <dbReference type="Rhea" id="RHEA-COMP:9674"/>
        <dbReference type="ChEBI" id="CHEBI:15378"/>
        <dbReference type="ChEBI" id="CHEBI:30616"/>
        <dbReference type="ChEBI" id="CHEBI:33019"/>
        <dbReference type="ChEBI" id="CHEBI:58048"/>
        <dbReference type="ChEBI" id="CHEBI:78442"/>
        <dbReference type="ChEBI" id="CHEBI:78515"/>
        <dbReference type="ChEBI" id="CHEBI:456215"/>
        <dbReference type="EC" id="6.1.1.22"/>
    </reaction>
</comment>
<comment type="subunit">
    <text evidence="1">Homodimer.</text>
</comment>
<comment type="subcellular location">
    <subcellularLocation>
        <location evidence="1">Cytoplasm</location>
    </subcellularLocation>
</comment>
<comment type="similarity">
    <text evidence="1">Belongs to the class-II aminoacyl-tRNA synthetase family.</text>
</comment>
<comment type="sequence caution" evidence="2">
    <conflict type="erroneous initiation">
        <sequence resource="EMBL-CDS" id="AAC22949"/>
    </conflict>
</comment>
<dbReference type="EC" id="6.1.1.22" evidence="1"/>
<dbReference type="EMBL" id="L42023">
    <property type="protein sequence ID" value="AAC22949.1"/>
    <property type="status" value="ALT_INIT"/>
    <property type="molecule type" value="Genomic_DNA"/>
</dbReference>
<dbReference type="PIR" id="B64115">
    <property type="entry name" value="B64115"/>
</dbReference>
<dbReference type="RefSeq" id="NP_439453.2">
    <property type="nucleotide sequence ID" value="NC_000907.1"/>
</dbReference>
<dbReference type="SMR" id="P43829"/>
<dbReference type="STRING" id="71421.HI_1302"/>
<dbReference type="EnsemblBacteria" id="AAC22949">
    <property type="protein sequence ID" value="AAC22949"/>
    <property type="gene ID" value="HI_1302"/>
</dbReference>
<dbReference type="KEGG" id="hin:HI_1302"/>
<dbReference type="PATRIC" id="fig|71421.8.peg.1354"/>
<dbReference type="eggNOG" id="COG0017">
    <property type="taxonomic scope" value="Bacteria"/>
</dbReference>
<dbReference type="HOGENOM" id="CLU_004553_2_0_6"/>
<dbReference type="OrthoDB" id="9762036at2"/>
<dbReference type="PhylomeDB" id="P43829"/>
<dbReference type="BioCyc" id="HINF71421:G1GJ1-1327-MONOMER"/>
<dbReference type="Proteomes" id="UP000000579">
    <property type="component" value="Chromosome"/>
</dbReference>
<dbReference type="GO" id="GO:0005737">
    <property type="term" value="C:cytoplasm"/>
    <property type="evidence" value="ECO:0007669"/>
    <property type="project" value="UniProtKB-SubCell"/>
</dbReference>
<dbReference type="GO" id="GO:0004816">
    <property type="term" value="F:asparagine-tRNA ligase activity"/>
    <property type="evidence" value="ECO:0007669"/>
    <property type="project" value="UniProtKB-UniRule"/>
</dbReference>
<dbReference type="GO" id="GO:0005524">
    <property type="term" value="F:ATP binding"/>
    <property type="evidence" value="ECO:0007669"/>
    <property type="project" value="UniProtKB-UniRule"/>
</dbReference>
<dbReference type="GO" id="GO:0003676">
    <property type="term" value="F:nucleic acid binding"/>
    <property type="evidence" value="ECO:0007669"/>
    <property type="project" value="InterPro"/>
</dbReference>
<dbReference type="GO" id="GO:0006421">
    <property type="term" value="P:asparaginyl-tRNA aminoacylation"/>
    <property type="evidence" value="ECO:0000318"/>
    <property type="project" value="GO_Central"/>
</dbReference>
<dbReference type="CDD" id="cd00776">
    <property type="entry name" value="AsxRS_core"/>
    <property type="match status" value="1"/>
</dbReference>
<dbReference type="CDD" id="cd04318">
    <property type="entry name" value="EcAsnRS_like_N"/>
    <property type="match status" value="1"/>
</dbReference>
<dbReference type="FunFam" id="3.30.930.10:FF:000016">
    <property type="entry name" value="Asparagine--tRNA ligase"/>
    <property type="match status" value="1"/>
</dbReference>
<dbReference type="Gene3D" id="3.30.930.10">
    <property type="entry name" value="Bira Bifunctional Protein, Domain 2"/>
    <property type="match status" value="1"/>
</dbReference>
<dbReference type="Gene3D" id="2.40.50.140">
    <property type="entry name" value="Nucleic acid-binding proteins"/>
    <property type="match status" value="1"/>
</dbReference>
<dbReference type="HAMAP" id="MF_00534">
    <property type="entry name" value="Asn_tRNA_synth"/>
    <property type="match status" value="1"/>
</dbReference>
<dbReference type="InterPro" id="IPR004364">
    <property type="entry name" value="Aa-tRNA-synt_II"/>
</dbReference>
<dbReference type="InterPro" id="IPR006195">
    <property type="entry name" value="aa-tRNA-synth_II"/>
</dbReference>
<dbReference type="InterPro" id="IPR045864">
    <property type="entry name" value="aa-tRNA-synth_II/BPL/LPL"/>
</dbReference>
<dbReference type="InterPro" id="IPR004522">
    <property type="entry name" value="Asn-tRNA-ligase"/>
</dbReference>
<dbReference type="InterPro" id="IPR002312">
    <property type="entry name" value="Asp/Asn-tRNA-synth_IIb"/>
</dbReference>
<dbReference type="InterPro" id="IPR012340">
    <property type="entry name" value="NA-bd_OB-fold"/>
</dbReference>
<dbReference type="InterPro" id="IPR004365">
    <property type="entry name" value="NA-bd_OB_tRNA"/>
</dbReference>
<dbReference type="NCBIfam" id="TIGR00457">
    <property type="entry name" value="asnS"/>
    <property type="match status" value="1"/>
</dbReference>
<dbReference type="NCBIfam" id="NF003037">
    <property type="entry name" value="PRK03932.1"/>
    <property type="match status" value="1"/>
</dbReference>
<dbReference type="PANTHER" id="PTHR22594:SF34">
    <property type="entry name" value="ASPARAGINE--TRNA LIGASE, MITOCHONDRIAL-RELATED"/>
    <property type="match status" value="1"/>
</dbReference>
<dbReference type="PANTHER" id="PTHR22594">
    <property type="entry name" value="ASPARTYL/LYSYL-TRNA SYNTHETASE"/>
    <property type="match status" value="1"/>
</dbReference>
<dbReference type="Pfam" id="PF00152">
    <property type="entry name" value="tRNA-synt_2"/>
    <property type="match status" value="1"/>
</dbReference>
<dbReference type="Pfam" id="PF01336">
    <property type="entry name" value="tRNA_anti-codon"/>
    <property type="match status" value="1"/>
</dbReference>
<dbReference type="PRINTS" id="PR01042">
    <property type="entry name" value="TRNASYNTHASP"/>
</dbReference>
<dbReference type="SUPFAM" id="SSF55681">
    <property type="entry name" value="Class II aaRS and biotin synthetases"/>
    <property type="match status" value="1"/>
</dbReference>
<dbReference type="SUPFAM" id="SSF50249">
    <property type="entry name" value="Nucleic acid-binding proteins"/>
    <property type="match status" value="1"/>
</dbReference>
<dbReference type="PROSITE" id="PS50862">
    <property type="entry name" value="AA_TRNA_LIGASE_II"/>
    <property type="match status" value="1"/>
</dbReference>